<protein>
    <recommendedName>
        <fullName>Fe/S biogenesis protein NfuA</fullName>
    </recommendedName>
</protein>
<sequence length="100" mass="10919">MIRISDAAQAHFAKLLANQEEGTQIRVFVINPGTPNAECGVSYCPPDAVEDTDTALKFEQLTAYVDELSAPYLEDAEIDFVTDQLGSQLTLKARTPKCAK</sequence>
<organism>
    <name type="scientific">Klebsiella pneumoniae</name>
    <dbReference type="NCBI Taxonomy" id="573"/>
    <lineage>
        <taxon>Bacteria</taxon>
        <taxon>Pseudomonadati</taxon>
        <taxon>Pseudomonadota</taxon>
        <taxon>Gammaproteobacteria</taxon>
        <taxon>Enterobacterales</taxon>
        <taxon>Enterobacteriaceae</taxon>
        <taxon>Klebsiella/Raoultella group</taxon>
        <taxon>Klebsiella</taxon>
        <taxon>Klebsiella pneumoniae complex</taxon>
    </lineage>
</organism>
<proteinExistence type="inferred from homology"/>
<dbReference type="EMBL" id="AJ292303">
    <property type="protein sequence ID" value="CAC19417.1"/>
    <property type="molecule type" value="Genomic_DNA"/>
</dbReference>
<dbReference type="SMR" id="Q9EXI9"/>
<dbReference type="GO" id="GO:0051539">
    <property type="term" value="F:4 iron, 4 sulfur cluster binding"/>
    <property type="evidence" value="ECO:0007669"/>
    <property type="project" value="UniProtKB-KW"/>
</dbReference>
<dbReference type="GO" id="GO:0046872">
    <property type="term" value="F:metal ion binding"/>
    <property type="evidence" value="ECO:0007669"/>
    <property type="project" value="UniProtKB-KW"/>
</dbReference>
<dbReference type="Gene3D" id="2.60.300.12">
    <property type="entry name" value="HesB-like domain"/>
    <property type="match status" value="1"/>
</dbReference>
<dbReference type="InterPro" id="IPR000361">
    <property type="entry name" value="FeS_biogenesis"/>
</dbReference>
<dbReference type="InterPro" id="IPR035903">
    <property type="entry name" value="HesB-like_dom_sf"/>
</dbReference>
<dbReference type="Pfam" id="PF01521">
    <property type="entry name" value="Fe-S_biosyn"/>
    <property type="match status" value="1"/>
</dbReference>
<dbReference type="SUPFAM" id="SSF89360">
    <property type="entry name" value="HesB-like domain"/>
    <property type="match status" value="1"/>
</dbReference>
<accession>Q9EXI9</accession>
<feature type="chain" id="PRO_0000209477" description="Fe/S biogenesis protein NfuA">
    <location>
        <begin position="1"/>
        <end position="100" status="greater than"/>
    </location>
</feature>
<feature type="non-terminal residue">
    <location>
        <position position="100"/>
    </location>
</feature>
<name>NFUA_KLEPN</name>
<comment type="function">
    <text evidence="1">Involved in iron-sulfur cluster biogenesis. Binds a 4Fe-4S cluster, can transfer this cluster to apoproteins, and thereby intervenes in the maturation of Fe/S proteins. Could also act as a scaffold/chaperone for damaged Fe/S proteins (By similarity).</text>
</comment>
<comment type="cofactor">
    <cofactor evidence="1">
        <name>[4Fe-4S] cluster</name>
        <dbReference type="ChEBI" id="CHEBI:49883"/>
    </cofactor>
    <text evidence="1">Binds 1 [4Fe-4S] cluster per subunit. The cluster is presumably bound at the interface of two monomers.</text>
</comment>
<comment type="subunit">
    <text evidence="1">Homodimer.</text>
</comment>
<comment type="similarity">
    <text evidence="2">Belongs to the NfuA family.</text>
</comment>
<gene>
    <name type="primary">nfuA</name>
    <name type="synonym">yhgI</name>
</gene>
<evidence type="ECO:0000250" key="1"/>
<evidence type="ECO:0000305" key="2"/>
<reference key="1">
    <citation type="journal article" date="2001" name="Infect. Immun.">
        <title>Identification of genes induced in vivo during Klebsiella pneumoniae CG43 infection.</title>
        <authorList>
            <person name="Lai Y.-C."/>
            <person name="Peng H.-L."/>
            <person name="Chang H.-Y."/>
        </authorList>
    </citation>
    <scope>NUCLEOTIDE SEQUENCE [GENOMIC DNA]</scope>
    <source>
        <strain>CG43</strain>
    </source>
</reference>
<keyword id="KW-0004">4Fe-4S</keyword>
<keyword id="KW-0408">Iron</keyword>
<keyword id="KW-0411">Iron-sulfur</keyword>
<keyword id="KW-0479">Metal-binding</keyword>